<protein>
    <recommendedName>
        <fullName>Proteasome activator complex subunit 2</fullName>
    </recommendedName>
    <alternativeName>
        <fullName>Proteasome activator 28 subunit beta</fullName>
        <shortName>PA28b</shortName>
        <shortName>PA28beta</shortName>
    </alternativeName>
</protein>
<keyword id="KW-0007">Acetylation</keyword>
<keyword id="KW-0597">Phosphoprotein</keyword>
<keyword id="KW-0647">Proteasome</keyword>
<keyword id="KW-1185">Reference proteome</keyword>
<feature type="initiator methionine" description="Removed" evidence="2">
    <location>
        <position position="1"/>
    </location>
</feature>
<feature type="chain" id="PRO_0000161787" description="Proteasome activator complex subunit 2">
    <location>
        <begin position="2"/>
        <end position="239"/>
    </location>
</feature>
<feature type="region of interest" description="Disordered" evidence="3">
    <location>
        <begin position="65"/>
        <end position="86"/>
    </location>
</feature>
<feature type="compositionally biased region" description="Basic and acidic residues" evidence="3">
    <location>
        <begin position="72"/>
        <end position="86"/>
    </location>
</feature>
<feature type="modified residue" description="N-acetylalanine" evidence="2">
    <location>
        <position position="2"/>
    </location>
</feature>
<feature type="modified residue" description="Phosphoserine" evidence="2">
    <location>
        <position position="10"/>
    </location>
</feature>
<organism>
    <name type="scientific">Sus scrofa</name>
    <name type="common">Pig</name>
    <dbReference type="NCBI Taxonomy" id="9823"/>
    <lineage>
        <taxon>Eukaryota</taxon>
        <taxon>Metazoa</taxon>
        <taxon>Chordata</taxon>
        <taxon>Craniata</taxon>
        <taxon>Vertebrata</taxon>
        <taxon>Euteleostomi</taxon>
        <taxon>Mammalia</taxon>
        <taxon>Eutheria</taxon>
        <taxon>Laurasiatheria</taxon>
        <taxon>Artiodactyla</taxon>
        <taxon>Suina</taxon>
        <taxon>Suidae</taxon>
        <taxon>Sus</taxon>
    </lineage>
</organism>
<evidence type="ECO:0000250" key="1"/>
<evidence type="ECO:0000250" key="2">
    <source>
        <dbReference type="UniProtKB" id="Q9UL46"/>
    </source>
</evidence>
<evidence type="ECO:0000256" key="3">
    <source>
        <dbReference type="SAM" id="MobiDB-lite"/>
    </source>
</evidence>
<evidence type="ECO:0000305" key="4"/>
<gene>
    <name type="primary">PSME2</name>
</gene>
<dbReference type="EMBL" id="AF527991">
    <property type="protein sequence ID" value="AAP30879.1"/>
    <property type="molecule type" value="mRNA"/>
</dbReference>
<dbReference type="EMBL" id="AY317125">
    <property type="protein sequence ID" value="AAQ83575.1"/>
    <property type="molecule type" value="Genomic_DNA"/>
</dbReference>
<dbReference type="RefSeq" id="NP_999444.1">
    <property type="nucleotide sequence ID" value="NM_214279.1"/>
</dbReference>
<dbReference type="SMR" id="Q863Z0"/>
<dbReference type="FunCoup" id="Q863Z0">
    <property type="interactions" value="856"/>
</dbReference>
<dbReference type="STRING" id="9823.ENSSSCP00000002190"/>
<dbReference type="PaxDb" id="9823-ENSSSCP00000002190"/>
<dbReference type="PeptideAtlas" id="Q863Z0"/>
<dbReference type="GeneID" id="397522"/>
<dbReference type="KEGG" id="ssc:397522"/>
<dbReference type="CTD" id="5721"/>
<dbReference type="eggNOG" id="KOG4470">
    <property type="taxonomic scope" value="Eukaryota"/>
</dbReference>
<dbReference type="InParanoid" id="Q863Z0"/>
<dbReference type="OrthoDB" id="6591885at2759"/>
<dbReference type="Proteomes" id="UP000008227">
    <property type="component" value="Unplaced"/>
</dbReference>
<dbReference type="Proteomes" id="UP000314985">
    <property type="component" value="Unplaced"/>
</dbReference>
<dbReference type="Proteomes" id="UP000694570">
    <property type="component" value="Unplaced"/>
</dbReference>
<dbReference type="Proteomes" id="UP000694571">
    <property type="component" value="Unplaced"/>
</dbReference>
<dbReference type="Proteomes" id="UP000694720">
    <property type="component" value="Unplaced"/>
</dbReference>
<dbReference type="Proteomes" id="UP000694722">
    <property type="component" value="Unplaced"/>
</dbReference>
<dbReference type="Proteomes" id="UP000694723">
    <property type="component" value="Unplaced"/>
</dbReference>
<dbReference type="Proteomes" id="UP000694724">
    <property type="component" value="Unplaced"/>
</dbReference>
<dbReference type="Proteomes" id="UP000694725">
    <property type="component" value="Unplaced"/>
</dbReference>
<dbReference type="Proteomes" id="UP000694726">
    <property type="component" value="Unplaced"/>
</dbReference>
<dbReference type="Proteomes" id="UP000694727">
    <property type="component" value="Unplaced"/>
</dbReference>
<dbReference type="Proteomes" id="UP000694728">
    <property type="component" value="Unplaced"/>
</dbReference>
<dbReference type="GO" id="GO:0005737">
    <property type="term" value="C:cytoplasm"/>
    <property type="evidence" value="ECO:0000318"/>
    <property type="project" value="GO_Central"/>
</dbReference>
<dbReference type="GO" id="GO:0005654">
    <property type="term" value="C:nucleoplasm"/>
    <property type="evidence" value="ECO:0000318"/>
    <property type="project" value="GO_Central"/>
</dbReference>
<dbReference type="GO" id="GO:0008537">
    <property type="term" value="C:proteasome activator complex"/>
    <property type="evidence" value="ECO:0007669"/>
    <property type="project" value="InterPro"/>
</dbReference>
<dbReference type="GO" id="GO:0061133">
    <property type="term" value="F:endopeptidase activator activity"/>
    <property type="evidence" value="ECO:0000318"/>
    <property type="project" value="GO_Central"/>
</dbReference>
<dbReference type="GO" id="GO:2000045">
    <property type="term" value="P:regulation of G1/S transition of mitotic cell cycle"/>
    <property type="evidence" value="ECO:0000318"/>
    <property type="project" value="GO_Central"/>
</dbReference>
<dbReference type="GO" id="GO:0061136">
    <property type="term" value="P:regulation of proteasomal protein catabolic process"/>
    <property type="evidence" value="ECO:0000318"/>
    <property type="project" value="GO_Central"/>
</dbReference>
<dbReference type="FunFam" id="1.20.120.180:FF:000002">
    <property type="entry name" value="Proteasome activator complex subunit 1"/>
    <property type="match status" value="1"/>
</dbReference>
<dbReference type="FunFam" id="1.20.5.120:FF:000002">
    <property type="entry name" value="proteasome activator complex subunit 2"/>
    <property type="match status" value="1"/>
</dbReference>
<dbReference type="Gene3D" id="1.20.120.180">
    <property type="entry name" value="Proteasome activator pa28, C-terminal domain"/>
    <property type="match status" value="1"/>
</dbReference>
<dbReference type="Gene3D" id="1.20.5.120">
    <property type="entry name" value="Proteasome activator pa28, N-terminal domain"/>
    <property type="match status" value="1"/>
</dbReference>
<dbReference type="InterPro" id="IPR003186">
    <property type="entry name" value="PA28_C"/>
</dbReference>
<dbReference type="InterPro" id="IPR036997">
    <property type="entry name" value="PA28_C_sf"/>
</dbReference>
<dbReference type="InterPro" id="IPR036996">
    <property type="entry name" value="PA28_N_sf"/>
</dbReference>
<dbReference type="InterPro" id="IPR009077">
    <property type="entry name" value="Proteasome_activ_PA28"/>
</dbReference>
<dbReference type="InterPro" id="IPR003185">
    <property type="entry name" value="Proteasome_activ_PA28_N"/>
</dbReference>
<dbReference type="InterPro" id="IPR036252">
    <property type="entry name" value="Proteasome_activ_sf"/>
</dbReference>
<dbReference type="PANTHER" id="PTHR10660:SF6">
    <property type="entry name" value="PROTEASOME ACTIVATOR COMPLEX SUBUNIT 2"/>
    <property type="match status" value="1"/>
</dbReference>
<dbReference type="PANTHER" id="PTHR10660">
    <property type="entry name" value="PROTEASOME REGULATOR PA28"/>
    <property type="match status" value="1"/>
</dbReference>
<dbReference type="Pfam" id="PF02252">
    <property type="entry name" value="PA28_C"/>
    <property type="match status" value="1"/>
</dbReference>
<dbReference type="Pfam" id="PF02251">
    <property type="entry name" value="PA28_N"/>
    <property type="match status" value="1"/>
</dbReference>
<dbReference type="SUPFAM" id="SSF47216">
    <property type="entry name" value="Proteasome activator"/>
    <property type="match status" value="1"/>
</dbReference>
<proteinExistence type="evidence at transcript level"/>
<sequence length="239" mass="27296">MAKPCGVRLSGEARKQVDVFRQNLFQEAEEFLYRFLPQKIIYLSQLLQEDSLNVTDLTSLRAPLDIPIPDPPPKDDEMETDKQEKKEVPKCGFLPGNEKILALLGLVKPEVWTLKEKCILVITWIQHLIPKIEDGNDFGVAVQEKVLERVNAVKTKVEAFQTTISKYFSERGDAVAKASKETHVMDYRALVHERDEAAHGELRAMVLDLRAFYAELYHIISSNLEKIVDPKGEEKPSMY</sequence>
<comment type="function">
    <text evidence="1">Implicated in immunoproteasome assembly and required for efficient antigen processing. The PA28 activator complex enhances the generation of class I binding peptides by altering the cleavage pattern of the proteasome (By similarity).</text>
</comment>
<comment type="subunit">
    <text evidence="1">Heterodimer of PSME1 and PSME2, which forms a hexameric ring.</text>
</comment>
<comment type="similarity">
    <text evidence="4">Belongs to the PA28 family.</text>
</comment>
<accession>Q863Z0</accession>
<reference key="1">
    <citation type="journal article" date="2004" name="Anim. Genet.">
        <title>Sequence characterization, polymorphism and chromosomal localizations of the porcine PSME1 and PSME2 genes.</title>
        <authorList>
            <person name="Wang Y.F."/>
            <person name="Yu M."/>
            <person name="te Pas M.F.W."/>
            <person name="Yerle M."/>
            <person name="Liu B."/>
            <person name="Fan B."/>
            <person name="Xiong T.A."/>
            <person name="Li K."/>
        </authorList>
    </citation>
    <scope>NUCLEOTIDE SEQUENCE [GENOMIC DNA / MRNA]</scope>
</reference>
<name>PSME2_PIG</name>